<accession>B0RNU6</accession>
<keyword id="KW-0067">ATP-binding</keyword>
<keyword id="KW-0378">Hydrolase</keyword>
<keyword id="KW-0460">Magnesium</keyword>
<keyword id="KW-0479">Metal-binding</keyword>
<keyword id="KW-0511">Multifunctional enzyme</keyword>
<keyword id="KW-0533">Nickel</keyword>
<keyword id="KW-0547">Nucleotide-binding</keyword>
<keyword id="KW-0548">Nucleotidyltransferase</keyword>
<keyword id="KW-0692">RNA repair</keyword>
<keyword id="KW-0694">RNA-binding</keyword>
<keyword id="KW-0808">Transferase</keyword>
<keyword id="KW-0819">tRNA processing</keyword>
<proteinExistence type="inferred from homology"/>
<gene>
    <name evidence="1" type="primary">cca</name>
    <name type="ordered locus">xcc-b100_0790</name>
</gene>
<protein>
    <recommendedName>
        <fullName evidence="1">Multifunctional CCA protein</fullName>
    </recommendedName>
    <domain>
        <recommendedName>
            <fullName evidence="1">CCA-adding enzyme</fullName>
            <ecNumber evidence="1">2.7.7.72</ecNumber>
        </recommendedName>
        <alternativeName>
            <fullName evidence="1">CCA tRNA nucleotidyltransferase</fullName>
        </alternativeName>
        <alternativeName>
            <fullName evidence="1">tRNA CCA-pyrophosphorylase</fullName>
        </alternativeName>
        <alternativeName>
            <fullName evidence="1">tRNA adenylyl-/cytidylyl-transferase</fullName>
        </alternativeName>
        <alternativeName>
            <fullName evidence="1">tRNA nucleotidyltransferase</fullName>
        </alternativeName>
        <alternativeName>
            <fullName evidence="1">tRNA-NT</fullName>
        </alternativeName>
    </domain>
    <domain>
        <recommendedName>
            <fullName evidence="1">2'-nucleotidase</fullName>
            <ecNumber evidence="1">3.1.3.-</ecNumber>
        </recommendedName>
    </domain>
    <domain>
        <recommendedName>
            <fullName evidence="1">2',3'-cyclic phosphodiesterase</fullName>
            <ecNumber evidence="1">3.1.4.-</ecNumber>
        </recommendedName>
    </domain>
    <domain>
        <recommendedName>
            <fullName evidence="1">Phosphatase</fullName>
            <ecNumber evidence="1">3.1.3.-</ecNumber>
        </recommendedName>
    </domain>
</protein>
<organism>
    <name type="scientific">Xanthomonas campestris pv. campestris (strain B100)</name>
    <dbReference type="NCBI Taxonomy" id="509169"/>
    <lineage>
        <taxon>Bacteria</taxon>
        <taxon>Pseudomonadati</taxon>
        <taxon>Pseudomonadota</taxon>
        <taxon>Gammaproteobacteria</taxon>
        <taxon>Lysobacterales</taxon>
        <taxon>Lysobacteraceae</taxon>
        <taxon>Xanthomonas</taxon>
    </lineage>
</organism>
<dbReference type="EC" id="2.7.7.72" evidence="1"/>
<dbReference type="EC" id="3.1.3.-" evidence="1"/>
<dbReference type="EC" id="3.1.4.-" evidence="1"/>
<dbReference type="EMBL" id="AM920689">
    <property type="protein sequence ID" value="CAP50131.1"/>
    <property type="molecule type" value="Genomic_DNA"/>
</dbReference>
<dbReference type="SMR" id="B0RNU6"/>
<dbReference type="KEGG" id="xca:xcc-b100_0790"/>
<dbReference type="HOGENOM" id="CLU_015961_1_1_6"/>
<dbReference type="Proteomes" id="UP000001188">
    <property type="component" value="Chromosome"/>
</dbReference>
<dbReference type="GO" id="GO:0005524">
    <property type="term" value="F:ATP binding"/>
    <property type="evidence" value="ECO:0007669"/>
    <property type="project" value="UniProtKB-UniRule"/>
</dbReference>
<dbReference type="GO" id="GO:0004810">
    <property type="term" value="F:CCA tRNA nucleotidyltransferase activity"/>
    <property type="evidence" value="ECO:0007669"/>
    <property type="project" value="UniProtKB-UniRule"/>
</dbReference>
<dbReference type="GO" id="GO:0004112">
    <property type="term" value="F:cyclic-nucleotide phosphodiesterase activity"/>
    <property type="evidence" value="ECO:0007669"/>
    <property type="project" value="UniProtKB-UniRule"/>
</dbReference>
<dbReference type="GO" id="GO:0000287">
    <property type="term" value="F:magnesium ion binding"/>
    <property type="evidence" value="ECO:0007669"/>
    <property type="project" value="UniProtKB-UniRule"/>
</dbReference>
<dbReference type="GO" id="GO:0016791">
    <property type="term" value="F:phosphatase activity"/>
    <property type="evidence" value="ECO:0007669"/>
    <property type="project" value="UniProtKB-UniRule"/>
</dbReference>
<dbReference type="GO" id="GO:0000049">
    <property type="term" value="F:tRNA binding"/>
    <property type="evidence" value="ECO:0007669"/>
    <property type="project" value="UniProtKB-UniRule"/>
</dbReference>
<dbReference type="GO" id="GO:0042245">
    <property type="term" value="P:RNA repair"/>
    <property type="evidence" value="ECO:0007669"/>
    <property type="project" value="UniProtKB-KW"/>
</dbReference>
<dbReference type="GO" id="GO:0001680">
    <property type="term" value="P:tRNA 3'-terminal CCA addition"/>
    <property type="evidence" value="ECO:0007669"/>
    <property type="project" value="UniProtKB-UniRule"/>
</dbReference>
<dbReference type="CDD" id="cd05398">
    <property type="entry name" value="NT_ClassII-CCAase"/>
    <property type="match status" value="1"/>
</dbReference>
<dbReference type="Gene3D" id="3.30.460.10">
    <property type="entry name" value="Beta Polymerase, domain 2"/>
    <property type="match status" value="1"/>
</dbReference>
<dbReference type="Gene3D" id="1.10.3090.10">
    <property type="entry name" value="cca-adding enzyme, domain 2"/>
    <property type="match status" value="1"/>
</dbReference>
<dbReference type="HAMAP" id="MF_01261">
    <property type="entry name" value="CCA_bact_type1"/>
    <property type="match status" value="1"/>
</dbReference>
<dbReference type="InterPro" id="IPR012006">
    <property type="entry name" value="CCA_bact"/>
</dbReference>
<dbReference type="InterPro" id="IPR006674">
    <property type="entry name" value="HD_domain"/>
</dbReference>
<dbReference type="InterPro" id="IPR043519">
    <property type="entry name" value="NT_sf"/>
</dbReference>
<dbReference type="InterPro" id="IPR002646">
    <property type="entry name" value="PolA_pol_head_dom"/>
</dbReference>
<dbReference type="InterPro" id="IPR032828">
    <property type="entry name" value="PolyA_RNA-bd"/>
</dbReference>
<dbReference type="InterPro" id="IPR050124">
    <property type="entry name" value="tRNA_CCA-adding_enzyme"/>
</dbReference>
<dbReference type="NCBIfam" id="NF008137">
    <property type="entry name" value="PRK10885.1"/>
    <property type="match status" value="1"/>
</dbReference>
<dbReference type="PANTHER" id="PTHR47545">
    <property type="entry name" value="MULTIFUNCTIONAL CCA PROTEIN"/>
    <property type="match status" value="1"/>
</dbReference>
<dbReference type="PANTHER" id="PTHR47545:SF1">
    <property type="entry name" value="MULTIFUNCTIONAL CCA PROTEIN"/>
    <property type="match status" value="1"/>
</dbReference>
<dbReference type="Pfam" id="PF01966">
    <property type="entry name" value="HD"/>
    <property type="match status" value="1"/>
</dbReference>
<dbReference type="Pfam" id="PF01743">
    <property type="entry name" value="PolyA_pol"/>
    <property type="match status" value="1"/>
</dbReference>
<dbReference type="Pfam" id="PF12627">
    <property type="entry name" value="PolyA_pol_RNAbd"/>
    <property type="match status" value="1"/>
</dbReference>
<dbReference type="PIRSF" id="PIRSF000813">
    <property type="entry name" value="CCA_bact"/>
    <property type="match status" value="1"/>
</dbReference>
<dbReference type="SUPFAM" id="SSF81301">
    <property type="entry name" value="Nucleotidyltransferase"/>
    <property type="match status" value="1"/>
</dbReference>
<dbReference type="SUPFAM" id="SSF81891">
    <property type="entry name" value="Poly A polymerase C-terminal region-like"/>
    <property type="match status" value="1"/>
</dbReference>
<dbReference type="PROSITE" id="PS51831">
    <property type="entry name" value="HD"/>
    <property type="match status" value="1"/>
</dbReference>
<sequence>MKIYLVGGAVRDALLGQPAGDRDWVVVGADQAQMQALGYKPVGKDFPVFLHPRSGEEYALARTERKSGRGYRGFVVDADPSVTLEEDLLRRDFTINAIARDEASGEVFDPYGGVRDLQQRVLRHVGPAFVEDPVRVLRAARFMARLAPLGFGIAPETAALMREMADSGELDSLVPERVWQELRRVLGSAQPSAFLRTLHDTGALRAILPELDALYGVPQRAEFHPEVDTGVHQEMVSDMAARLAPGDALVGFAALTHDLGKALTPPEQWPRHVMHEQRGVAPLQALCERLKVPQDYRQLAVTACREHLNVHRLPELRDRTVHELLVRCDGFRRPERIAQLALVCEADKRGRLGSEEAAYPQGPELQRVHAAALAINARDLAADGLQGPQIGEALASARIAAIAQARSLRQ</sequence>
<evidence type="ECO:0000255" key="1">
    <source>
        <dbReference type="HAMAP-Rule" id="MF_01261"/>
    </source>
</evidence>
<name>CCA_XANCB</name>
<comment type="function">
    <text evidence="1">Catalyzes the addition and repair of the essential 3'-terminal CCA sequence in tRNAs without using a nucleic acid template. Adds these three nucleotides in the order of C, C, and A to the tRNA nucleotide-73, using CTP and ATP as substrates and producing inorganic pyrophosphate. tRNA 3'-terminal CCA addition is required both for tRNA processing and repair. Also involved in tRNA surveillance by mediating tandem CCA addition to generate a CCACCA at the 3' terminus of unstable tRNAs. While stable tRNAs receive only 3'-terminal CCA, unstable tRNAs are marked with CCACCA and rapidly degraded.</text>
</comment>
<comment type="catalytic activity">
    <reaction evidence="1">
        <text>a tRNA precursor + 2 CTP + ATP = a tRNA with a 3' CCA end + 3 diphosphate</text>
        <dbReference type="Rhea" id="RHEA:14433"/>
        <dbReference type="Rhea" id="RHEA-COMP:10465"/>
        <dbReference type="Rhea" id="RHEA-COMP:10468"/>
        <dbReference type="ChEBI" id="CHEBI:30616"/>
        <dbReference type="ChEBI" id="CHEBI:33019"/>
        <dbReference type="ChEBI" id="CHEBI:37563"/>
        <dbReference type="ChEBI" id="CHEBI:74896"/>
        <dbReference type="ChEBI" id="CHEBI:83071"/>
        <dbReference type="EC" id="2.7.7.72"/>
    </reaction>
</comment>
<comment type="catalytic activity">
    <reaction evidence="1">
        <text>a tRNA with a 3' CCA end + 2 CTP + ATP = a tRNA with a 3' CCACCA end + 3 diphosphate</text>
        <dbReference type="Rhea" id="RHEA:76235"/>
        <dbReference type="Rhea" id="RHEA-COMP:10468"/>
        <dbReference type="Rhea" id="RHEA-COMP:18655"/>
        <dbReference type="ChEBI" id="CHEBI:30616"/>
        <dbReference type="ChEBI" id="CHEBI:33019"/>
        <dbReference type="ChEBI" id="CHEBI:37563"/>
        <dbReference type="ChEBI" id="CHEBI:83071"/>
        <dbReference type="ChEBI" id="CHEBI:195187"/>
    </reaction>
    <physiologicalReaction direction="left-to-right" evidence="1">
        <dbReference type="Rhea" id="RHEA:76236"/>
    </physiologicalReaction>
</comment>
<comment type="cofactor">
    <cofactor evidence="1">
        <name>Mg(2+)</name>
        <dbReference type="ChEBI" id="CHEBI:18420"/>
    </cofactor>
    <text evidence="1">Magnesium is required for nucleotidyltransferase activity.</text>
</comment>
<comment type="cofactor">
    <cofactor evidence="1">
        <name>Ni(2+)</name>
        <dbReference type="ChEBI" id="CHEBI:49786"/>
    </cofactor>
    <text evidence="1">Nickel for phosphatase activity.</text>
</comment>
<comment type="subunit">
    <text evidence="1">Monomer. Can also form homodimers and oligomers.</text>
</comment>
<comment type="domain">
    <text evidence="1">Comprises two domains: an N-terminal domain containing the nucleotidyltransferase activity and a C-terminal HD domain associated with both phosphodiesterase and phosphatase activities.</text>
</comment>
<comment type="miscellaneous">
    <text evidence="1">A single active site specifically recognizes both ATP and CTP and is responsible for their addition.</text>
</comment>
<comment type="similarity">
    <text evidence="1">Belongs to the tRNA nucleotidyltransferase/poly(A) polymerase family. Bacterial CCA-adding enzyme type 1 subfamily.</text>
</comment>
<feature type="chain" id="PRO_1000140059" description="Multifunctional CCA protein">
    <location>
        <begin position="1"/>
        <end position="410"/>
    </location>
</feature>
<feature type="domain" description="HD" evidence="1">
    <location>
        <begin position="229"/>
        <end position="347"/>
    </location>
</feature>
<feature type="binding site" evidence="1">
    <location>
        <position position="8"/>
    </location>
    <ligand>
        <name>ATP</name>
        <dbReference type="ChEBI" id="CHEBI:30616"/>
    </ligand>
</feature>
<feature type="binding site" evidence="1">
    <location>
        <position position="8"/>
    </location>
    <ligand>
        <name>CTP</name>
        <dbReference type="ChEBI" id="CHEBI:37563"/>
    </ligand>
</feature>
<feature type="binding site" evidence="1">
    <location>
        <position position="11"/>
    </location>
    <ligand>
        <name>ATP</name>
        <dbReference type="ChEBI" id="CHEBI:30616"/>
    </ligand>
</feature>
<feature type="binding site" evidence="1">
    <location>
        <position position="11"/>
    </location>
    <ligand>
        <name>CTP</name>
        <dbReference type="ChEBI" id="CHEBI:37563"/>
    </ligand>
</feature>
<feature type="binding site" evidence="1">
    <location>
        <position position="21"/>
    </location>
    <ligand>
        <name>Mg(2+)</name>
        <dbReference type="ChEBI" id="CHEBI:18420"/>
    </ligand>
</feature>
<feature type="binding site" evidence="1">
    <location>
        <position position="23"/>
    </location>
    <ligand>
        <name>Mg(2+)</name>
        <dbReference type="ChEBI" id="CHEBI:18420"/>
    </ligand>
</feature>
<feature type="binding site" evidence="1">
    <location>
        <position position="91"/>
    </location>
    <ligand>
        <name>ATP</name>
        <dbReference type="ChEBI" id="CHEBI:30616"/>
    </ligand>
</feature>
<feature type="binding site" evidence="1">
    <location>
        <position position="91"/>
    </location>
    <ligand>
        <name>CTP</name>
        <dbReference type="ChEBI" id="CHEBI:37563"/>
    </ligand>
</feature>
<feature type="binding site" evidence="1">
    <location>
        <position position="138"/>
    </location>
    <ligand>
        <name>ATP</name>
        <dbReference type="ChEBI" id="CHEBI:30616"/>
    </ligand>
</feature>
<feature type="binding site" evidence="1">
    <location>
        <position position="138"/>
    </location>
    <ligand>
        <name>CTP</name>
        <dbReference type="ChEBI" id="CHEBI:37563"/>
    </ligand>
</feature>
<feature type="binding site" evidence="1">
    <location>
        <position position="141"/>
    </location>
    <ligand>
        <name>ATP</name>
        <dbReference type="ChEBI" id="CHEBI:30616"/>
    </ligand>
</feature>
<feature type="binding site" evidence="1">
    <location>
        <position position="141"/>
    </location>
    <ligand>
        <name>CTP</name>
        <dbReference type="ChEBI" id="CHEBI:37563"/>
    </ligand>
</feature>
<reference key="1">
    <citation type="journal article" date="2008" name="J. Biotechnol.">
        <title>The genome of Xanthomonas campestris pv. campestris B100 and its use for the reconstruction of metabolic pathways involved in xanthan biosynthesis.</title>
        <authorList>
            <person name="Vorhoelter F.-J."/>
            <person name="Schneiker S."/>
            <person name="Goesmann A."/>
            <person name="Krause L."/>
            <person name="Bekel T."/>
            <person name="Kaiser O."/>
            <person name="Linke B."/>
            <person name="Patschkowski T."/>
            <person name="Rueckert C."/>
            <person name="Schmid J."/>
            <person name="Sidhu V.K."/>
            <person name="Sieber V."/>
            <person name="Tauch A."/>
            <person name="Watt S.A."/>
            <person name="Weisshaar B."/>
            <person name="Becker A."/>
            <person name="Niehaus K."/>
            <person name="Puehler A."/>
        </authorList>
    </citation>
    <scope>NUCLEOTIDE SEQUENCE [LARGE SCALE GENOMIC DNA]</scope>
    <source>
        <strain>B100</strain>
    </source>
</reference>